<evidence type="ECO:0000255" key="1">
    <source>
        <dbReference type="HAMAP-Rule" id="MF_00298"/>
    </source>
</evidence>
<organism>
    <name type="scientific">Xylella fastidiosa (strain 9a5c)</name>
    <dbReference type="NCBI Taxonomy" id="160492"/>
    <lineage>
        <taxon>Bacteria</taxon>
        <taxon>Pseudomonadati</taxon>
        <taxon>Pseudomonadota</taxon>
        <taxon>Gammaproteobacteria</taxon>
        <taxon>Lysobacterales</taxon>
        <taxon>Lysobacteraceae</taxon>
        <taxon>Xylella</taxon>
    </lineage>
</organism>
<proteinExistence type="inferred from homology"/>
<keyword id="KW-0378">Hydrolase</keyword>
<reference key="1">
    <citation type="journal article" date="2000" name="Nature">
        <title>The genome sequence of the plant pathogen Xylella fastidiosa.</title>
        <authorList>
            <person name="Simpson A.J.G."/>
            <person name="Reinach F.C."/>
            <person name="Arruda P."/>
            <person name="Abreu F.A."/>
            <person name="Acencio M."/>
            <person name="Alvarenga R."/>
            <person name="Alves L.M.C."/>
            <person name="Araya J.E."/>
            <person name="Baia G.S."/>
            <person name="Baptista C.S."/>
            <person name="Barros M.H."/>
            <person name="Bonaccorsi E.D."/>
            <person name="Bordin S."/>
            <person name="Bove J.M."/>
            <person name="Briones M.R.S."/>
            <person name="Bueno M.R.P."/>
            <person name="Camargo A.A."/>
            <person name="Camargo L.E.A."/>
            <person name="Carraro D.M."/>
            <person name="Carrer H."/>
            <person name="Colauto N.B."/>
            <person name="Colombo C."/>
            <person name="Costa F.F."/>
            <person name="Costa M.C.R."/>
            <person name="Costa-Neto C.M."/>
            <person name="Coutinho L.L."/>
            <person name="Cristofani M."/>
            <person name="Dias-Neto E."/>
            <person name="Docena C."/>
            <person name="El-Dorry H."/>
            <person name="Facincani A.P."/>
            <person name="Ferreira A.J.S."/>
            <person name="Ferreira V.C.A."/>
            <person name="Ferro J.A."/>
            <person name="Fraga J.S."/>
            <person name="Franca S.C."/>
            <person name="Franco M.C."/>
            <person name="Frohme M."/>
            <person name="Furlan L.R."/>
            <person name="Garnier M."/>
            <person name="Goldman G.H."/>
            <person name="Goldman M.H.S."/>
            <person name="Gomes S.L."/>
            <person name="Gruber A."/>
            <person name="Ho P.L."/>
            <person name="Hoheisel J.D."/>
            <person name="Junqueira M.L."/>
            <person name="Kemper E.L."/>
            <person name="Kitajima J.P."/>
            <person name="Krieger J.E."/>
            <person name="Kuramae E.E."/>
            <person name="Laigret F."/>
            <person name="Lambais M.R."/>
            <person name="Leite L.C.C."/>
            <person name="Lemos E.G.M."/>
            <person name="Lemos M.V.F."/>
            <person name="Lopes S.A."/>
            <person name="Lopes C.R."/>
            <person name="Machado J.A."/>
            <person name="Machado M.A."/>
            <person name="Madeira A.M.B.N."/>
            <person name="Madeira H.M.F."/>
            <person name="Marino C.L."/>
            <person name="Marques M.V."/>
            <person name="Martins E.A.L."/>
            <person name="Martins E.M.F."/>
            <person name="Matsukuma A.Y."/>
            <person name="Menck C.F.M."/>
            <person name="Miracca E.C."/>
            <person name="Miyaki C.Y."/>
            <person name="Monteiro-Vitorello C.B."/>
            <person name="Moon D.H."/>
            <person name="Nagai M.A."/>
            <person name="Nascimento A.L.T.O."/>
            <person name="Netto L.E.S."/>
            <person name="Nhani A. Jr."/>
            <person name="Nobrega F.G."/>
            <person name="Nunes L.R."/>
            <person name="Oliveira M.A."/>
            <person name="de Oliveira M.C."/>
            <person name="de Oliveira R.C."/>
            <person name="Palmieri D.A."/>
            <person name="Paris A."/>
            <person name="Peixoto B.R."/>
            <person name="Pereira G.A.G."/>
            <person name="Pereira H.A. Jr."/>
            <person name="Pesquero J.B."/>
            <person name="Quaggio R.B."/>
            <person name="Roberto P.G."/>
            <person name="Rodrigues V."/>
            <person name="de Rosa A.J.M."/>
            <person name="de Rosa V.E. Jr."/>
            <person name="de Sa R.G."/>
            <person name="Santelli R.V."/>
            <person name="Sawasaki H.E."/>
            <person name="da Silva A.C.R."/>
            <person name="da Silva A.M."/>
            <person name="da Silva F.R."/>
            <person name="Silva W.A. Jr."/>
            <person name="da Silveira J.F."/>
            <person name="Silvestri M.L.Z."/>
            <person name="Siqueira W.J."/>
            <person name="de Souza A.A."/>
            <person name="de Souza A.P."/>
            <person name="Terenzi M.F."/>
            <person name="Truffi D."/>
            <person name="Tsai S.M."/>
            <person name="Tsuhako M.H."/>
            <person name="Vallada H."/>
            <person name="Van Sluys M.A."/>
            <person name="Verjovski-Almeida S."/>
            <person name="Vettore A.L."/>
            <person name="Zago M.A."/>
            <person name="Zatz M."/>
            <person name="Meidanis J."/>
            <person name="Setubal J.C."/>
        </authorList>
    </citation>
    <scope>NUCLEOTIDE SEQUENCE [LARGE SCALE GENOMIC DNA]</scope>
    <source>
        <strain>9a5c</strain>
    </source>
</reference>
<comment type="function">
    <text evidence="1">Accelerates the degradation of transcripts by removing pyrophosphate from the 5'-end of triphosphorylated RNA, leading to a more labile monophosphorylated state that can stimulate subsequent ribonuclease cleavage.</text>
</comment>
<comment type="cofactor">
    <cofactor evidence="1">
        <name>a divalent metal cation</name>
        <dbReference type="ChEBI" id="CHEBI:60240"/>
    </cofactor>
</comment>
<comment type="similarity">
    <text evidence="1">Belongs to the Nudix hydrolase family. RppH subfamily.</text>
</comment>
<sequence length="190" mass="22120">MIDPDGYRPNVGIVLMCRDGQVFWGRRVRLDGWQFPQGGMHSDETPVEAMYRELNEETGLLPEHVQLLGATPGWLRYRLPSQAVRCNRSQMCIGQKQVWFLLQLIGDESHVQLDQSENPEFDHWRWVSFWYPIEHVVMFKRGVYARALCQLASLAQQVVGLEVGTMPQYVQDICLLNVGYKHLPNWVSRY</sequence>
<accession>Q9PGA9</accession>
<protein>
    <recommendedName>
        <fullName evidence="1">RNA pyrophosphohydrolase</fullName>
        <ecNumber evidence="1">3.6.1.-</ecNumber>
    </recommendedName>
    <alternativeName>
        <fullName evidence="1">(Di)nucleoside polyphosphate hydrolase</fullName>
    </alternativeName>
</protein>
<name>RPPH_XYLFA</name>
<dbReference type="EC" id="3.6.1.-" evidence="1"/>
<dbReference type="EMBL" id="AE003849">
    <property type="protein sequence ID" value="AAF83203.1"/>
    <property type="molecule type" value="Genomic_DNA"/>
</dbReference>
<dbReference type="PIR" id="F82810">
    <property type="entry name" value="F82810"/>
</dbReference>
<dbReference type="RefSeq" id="WP_010892923.1">
    <property type="nucleotide sequence ID" value="NC_002488.3"/>
</dbReference>
<dbReference type="SMR" id="Q9PGA9"/>
<dbReference type="STRING" id="160492.XF_0393"/>
<dbReference type="KEGG" id="xfa:XF_0393"/>
<dbReference type="eggNOG" id="COG0494">
    <property type="taxonomic scope" value="Bacteria"/>
</dbReference>
<dbReference type="HOGENOM" id="CLU_087195_3_1_6"/>
<dbReference type="Proteomes" id="UP000000812">
    <property type="component" value="Chromosome"/>
</dbReference>
<dbReference type="GO" id="GO:0016462">
    <property type="term" value="F:pyrophosphatase activity"/>
    <property type="evidence" value="ECO:0007669"/>
    <property type="project" value="UniProtKB-ARBA"/>
</dbReference>
<dbReference type="CDD" id="cd03671">
    <property type="entry name" value="NUDIX_Ap4A_hydrolase_plant_like"/>
    <property type="match status" value="1"/>
</dbReference>
<dbReference type="FunFam" id="3.90.79.10:FF:000001">
    <property type="entry name" value="RNA pyrophosphohydrolase"/>
    <property type="match status" value="1"/>
</dbReference>
<dbReference type="Gene3D" id="3.90.79.10">
    <property type="entry name" value="Nucleoside Triphosphate Pyrophosphohydrolase"/>
    <property type="match status" value="1"/>
</dbReference>
<dbReference type="HAMAP" id="MF_00298">
    <property type="entry name" value="Nudix_RppH"/>
    <property type="match status" value="1"/>
</dbReference>
<dbReference type="InterPro" id="IPR015797">
    <property type="entry name" value="NUDIX_hydrolase-like_dom_sf"/>
</dbReference>
<dbReference type="InterPro" id="IPR020084">
    <property type="entry name" value="NUDIX_hydrolase_CS"/>
</dbReference>
<dbReference type="InterPro" id="IPR000086">
    <property type="entry name" value="NUDIX_hydrolase_dom"/>
</dbReference>
<dbReference type="InterPro" id="IPR022927">
    <property type="entry name" value="RppH"/>
</dbReference>
<dbReference type="NCBIfam" id="NF001937">
    <property type="entry name" value="PRK00714.1-4"/>
    <property type="match status" value="1"/>
</dbReference>
<dbReference type="NCBIfam" id="NF001938">
    <property type="entry name" value="PRK00714.1-5"/>
    <property type="match status" value="1"/>
</dbReference>
<dbReference type="PANTHER" id="PTHR43736">
    <property type="entry name" value="ADP-RIBOSE PYROPHOSPHATASE"/>
    <property type="match status" value="1"/>
</dbReference>
<dbReference type="PANTHER" id="PTHR43736:SF1">
    <property type="entry name" value="DIHYDRONEOPTERIN TRIPHOSPHATE DIPHOSPHATASE"/>
    <property type="match status" value="1"/>
</dbReference>
<dbReference type="Pfam" id="PF00293">
    <property type="entry name" value="NUDIX"/>
    <property type="match status" value="1"/>
</dbReference>
<dbReference type="SUPFAM" id="SSF55811">
    <property type="entry name" value="Nudix"/>
    <property type="match status" value="1"/>
</dbReference>
<dbReference type="PROSITE" id="PS51462">
    <property type="entry name" value="NUDIX"/>
    <property type="match status" value="1"/>
</dbReference>
<dbReference type="PROSITE" id="PS00893">
    <property type="entry name" value="NUDIX_BOX"/>
    <property type="match status" value="1"/>
</dbReference>
<gene>
    <name evidence="1" type="primary">rppH</name>
    <name evidence="1" type="synonym">nudH</name>
    <name type="ordered locus">XF_0393</name>
</gene>
<feature type="chain" id="PRO_0000057037" description="RNA pyrophosphohydrolase">
    <location>
        <begin position="1"/>
        <end position="190"/>
    </location>
</feature>
<feature type="domain" description="Nudix hydrolase" evidence="1">
    <location>
        <begin position="6"/>
        <end position="149"/>
    </location>
</feature>
<feature type="short sequence motif" description="Nudix box">
    <location>
        <begin position="38"/>
        <end position="59"/>
    </location>
</feature>